<keyword id="KW-0004">4Fe-4S</keyword>
<keyword id="KW-0963">Cytoplasm</keyword>
<keyword id="KW-1015">Disulfide bond</keyword>
<keyword id="KW-0408">Iron</keyword>
<keyword id="KW-0411">Iron-sulfur</keyword>
<keyword id="KW-0479">Metal-binding</keyword>
<keyword id="KW-0489">Methyltransferase</keyword>
<keyword id="KW-1185">Reference proteome</keyword>
<keyword id="KW-0949">S-adenosyl-L-methionine</keyword>
<keyword id="KW-0808">Transferase</keyword>
<reference key="1">
    <citation type="journal article" date="2008" name="Proc. Natl. Acad. Sci. U.S.A.">
        <title>Nitrogen fixation island and rhizosphere competence traits in the genome of root-associated Pseudomonas stutzeri A1501.</title>
        <authorList>
            <person name="Yan Y."/>
            <person name="Yang J."/>
            <person name="Dou Y."/>
            <person name="Chen M."/>
            <person name="Ping S."/>
            <person name="Peng J."/>
            <person name="Lu W."/>
            <person name="Zhang W."/>
            <person name="Yao Z."/>
            <person name="Li H."/>
            <person name="Liu W."/>
            <person name="He S."/>
            <person name="Geng L."/>
            <person name="Zhang X."/>
            <person name="Yang F."/>
            <person name="Yu H."/>
            <person name="Zhan Y."/>
            <person name="Li D."/>
            <person name="Lin Z."/>
            <person name="Wang Y."/>
            <person name="Elmerich C."/>
            <person name="Lin M."/>
            <person name="Jin Q."/>
        </authorList>
    </citation>
    <scope>NUCLEOTIDE SEQUENCE [LARGE SCALE GENOMIC DNA]</scope>
    <source>
        <strain>A1501</strain>
    </source>
</reference>
<dbReference type="EC" id="2.1.1.-"/>
<dbReference type="EMBL" id="CP000304">
    <property type="protein sequence ID" value="ABP79890.1"/>
    <property type="molecule type" value="Genomic_DNA"/>
</dbReference>
<dbReference type="RefSeq" id="WP_011913357.1">
    <property type="nucleotide sequence ID" value="NC_009434.1"/>
</dbReference>
<dbReference type="SMR" id="A4VLN9"/>
<dbReference type="KEGG" id="psa:PST_2231"/>
<dbReference type="eggNOG" id="COG0820">
    <property type="taxonomic scope" value="Bacteria"/>
</dbReference>
<dbReference type="HOGENOM" id="CLU_029101_3_3_6"/>
<dbReference type="Proteomes" id="UP000000233">
    <property type="component" value="Chromosome"/>
</dbReference>
<dbReference type="GO" id="GO:0005737">
    <property type="term" value="C:cytoplasm"/>
    <property type="evidence" value="ECO:0007669"/>
    <property type="project" value="UniProtKB-SubCell"/>
</dbReference>
<dbReference type="GO" id="GO:0051539">
    <property type="term" value="F:4 iron, 4 sulfur cluster binding"/>
    <property type="evidence" value="ECO:0007669"/>
    <property type="project" value="UniProtKB-KW"/>
</dbReference>
<dbReference type="GO" id="GO:0046872">
    <property type="term" value="F:metal ion binding"/>
    <property type="evidence" value="ECO:0007669"/>
    <property type="project" value="UniProtKB-KW"/>
</dbReference>
<dbReference type="GO" id="GO:0008173">
    <property type="term" value="F:RNA methyltransferase activity"/>
    <property type="evidence" value="ECO:0007669"/>
    <property type="project" value="InterPro"/>
</dbReference>
<dbReference type="GO" id="GO:0070475">
    <property type="term" value="P:rRNA base methylation"/>
    <property type="evidence" value="ECO:0007669"/>
    <property type="project" value="TreeGrafter"/>
</dbReference>
<dbReference type="GO" id="GO:0030488">
    <property type="term" value="P:tRNA methylation"/>
    <property type="evidence" value="ECO:0007669"/>
    <property type="project" value="TreeGrafter"/>
</dbReference>
<dbReference type="CDD" id="cd01335">
    <property type="entry name" value="Radical_SAM"/>
    <property type="match status" value="1"/>
</dbReference>
<dbReference type="Gene3D" id="3.20.20.70">
    <property type="entry name" value="Aldolase class I"/>
    <property type="match status" value="1"/>
</dbReference>
<dbReference type="InterPro" id="IPR013785">
    <property type="entry name" value="Aldolase_TIM"/>
</dbReference>
<dbReference type="InterPro" id="IPR040072">
    <property type="entry name" value="Methyltransferase_A"/>
</dbReference>
<dbReference type="InterPro" id="IPR004383">
    <property type="entry name" value="rRNA_lsu_MTrfase_RlmN/Cfr"/>
</dbReference>
<dbReference type="InterPro" id="IPR007197">
    <property type="entry name" value="rSAM"/>
</dbReference>
<dbReference type="NCBIfam" id="NF011034">
    <property type="entry name" value="PRK14464.1"/>
    <property type="match status" value="1"/>
</dbReference>
<dbReference type="PANTHER" id="PTHR30544">
    <property type="entry name" value="23S RRNA METHYLTRANSFERASE"/>
    <property type="match status" value="1"/>
</dbReference>
<dbReference type="PANTHER" id="PTHR30544:SF5">
    <property type="entry name" value="RADICAL SAM CORE DOMAIN-CONTAINING PROTEIN"/>
    <property type="match status" value="1"/>
</dbReference>
<dbReference type="Pfam" id="PF04055">
    <property type="entry name" value="Radical_SAM"/>
    <property type="match status" value="1"/>
</dbReference>
<dbReference type="PIRSF" id="PIRSF006004">
    <property type="entry name" value="CHP00048"/>
    <property type="match status" value="1"/>
</dbReference>
<dbReference type="SFLD" id="SFLDF00275">
    <property type="entry name" value="adenosine_C2_methyltransferase"/>
    <property type="match status" value="1"/>
</dbReference>
<dbReference type="SFLD" id="SFLDG01062">
    <property type="entry name" value="methyltransferase_(Class_A)"/>
    <property type="match status" value="1"/>
</dbReference>
<dbReference type="SUPFAM" id="SSF102114">
    <property type="entry name" value="Radical SAM enzymes"/>
    <property type="match status" value="1"/>
</dbReference>
<dbReference type="PROSITE" id="PS51918">
    <property type="entry name" value="RADICAL_SAM"/>
    <property type="match status" value="1"/>
</dbReference>
<sequence length="342" mass="37681">MRIPDFQQRLADIGAKPRHIGRMTRAWLKGLPLDVGRRQQQAEDFLPLSVREGLPALSLEIDALARLRSEHPAADGSARLLVELGDGQMVESVLLPRDGLCVSSQVGCAVGCVFCMTGKSGLLRQLGSAEIVAQVALARRFRPVKKVVFMGMGEPAHNLDNVLEAIDLLGTEGGIGHKNLVFSTVGDLRVFERLPQQRVKPALALSLHSTDGALRQALLPRAPQIAPEELVELGETYARATGFPIQYQWTLLKGINDNQEEMDGILRLLKGKYAVMNLIPYNSLEDDAYQRPEGERIVQIVRYLHSRGVLTKVRNSAGQDIDGGCGQLRARAEHVLGRRRPR</sequence>
<gene>
    <name type="ordered locus">PST_2231</name>
</gene>
<feature type="chain" id="PRO_0000350344" description="Probable RNA methyltransferase PST_2231">
    <location>
        <begin position="1"/>
        <end position="342"/>
    </location>
</feature>
<feature type="domain" description="Radical SAM core" evidence="3">
    <location>
        <begin position="94"/>
        <end position="320"/>
    </location>
</feature>
<feature type="active site" description="Proton acceptor" evidence="2">
    <location>
        <position position="91"/>
    </location>
</feature>
<feature type="active site" description="S-methylcysteine intermediate" evidence="1">
    <location>
        <position position="325"/>
    </location>
</feature>
<feature type="binding site" evidence="1">
    <location>
        <position position="108"/>
    </location>
    <ligand>
        <name>[4Fe-4S] cluster</name>
        <dbReference type="ChEBI" id="CHEBI:49883"/>
        <note>4Fe-4S-S-AdoMet</note>
    </ligand>
</feature>
<feature type="binding site" evidence="1">
    <location>
        <position position="112"/>
    </location>
    <ligand>
        <name>[4Fe-4S] cluster</name>
        <dbReference type="ChEBI" id="CHEBI:49883"/>
        <note>4Fe-4S-S-AdoMet</note>
    </ligand>
</feature>
<feature type="binding site" evidence="1">
    <location>
        <position position="115"/>
    </location>
    <ligand>
        <name>[4Fe-4S] cluster</name>
        <dbReference type="ChEBI" id="CHEBI:49883"/>
        <note>4Fe-4S-S-AdoMet</note>
    </ligand>
</feature>
<feature type="binding site" evidence="1">
    <location>
        <begin position="153"/>
        <end position="154"/>
    </location>
    <ligand>
        <name>S-adenosyl-L-methionine</name>
        <dbReference type="ChEBI" id="CHEBI:59789"/>
    </ligand>
</feature>
<feature type="binding site" evidence="1">
    <location>
        <position position="183"/>
    </location>
    <ligand>
        <name>S-adenosyl-L-methionine</name>
        <dbReference type="ChEBI" id="CHEBI:59789"/>
    </ligand>
</feature>
<feature type="binding site" evidence="1">
    <location>
        <begin position="206"/>
        <end position="208"/>
    </location>
    <ligand>
        <name>S-adenosyl-L-methionine</name>
        <dbReference type="ChEBI" id="CHEBI:59789"/>
    </ligand>
</feature>
<feature type="binding site" evidence="1">
    <location>
        <position position="282"/>
    </location>
    <ligand>
        <name>S-adenosyl-L-methionine</name>
        <dbReference type="ChEBI" id="CHEBI:59789"/>
    </ligand>
</feature>
<feature type="disulfide bond" description="(transient)" evidence="1">
    <location>
        <begin position="101"/>
        <end position="325"/>
    </location>
</feature>
<accession>A4VLN9</accession>
<comment type="cofactor">
    <cofactor evidence="1">
        <name>[4Fe-4S] cluster</name>
        <dbReference type="ChEBI" id="CHEBI:49883"/>
    </cofactor>
    <text evidence="1">Binds 1 [4Fe-4S] cluster. The cluster is coordinated with 3 cysteines and an exchangeable S-adenosyl-L-methionine.</text>
</comment>
<comment type="subcellular location">
    <subcellularLocation>
        <location evidence="4">Cytoplasm</location>
    </subcellularLocation>
</comment>
<comment type="similarity">
    <text evidence="4">Belongs to the radical SAM superfamily. RlmN family.</text>
</comment>
<organism>
    <name type="scientific">Stutzerimonas stutzeri (strain A1501)</name>
    <name type="common">Pseudomonas stutzeri</name>
    <dbReference type="NCBI Taxonomy" id="379731"/>
    <lineage>
        <taxon>Bacteria</taxon>
        <taxon>Pseudomonadati</taxon>
        <taxon>Pseudomonadota</taxon>
        <taxon>Gammaproteobacteria</taxon>
        <taxon>Pseudomonadales</taxon>
        <taxon>Pseudomonadaceae</taxon>
        <taxon>Stutzerimonas</taxon>
    </lineage>
</organism>
<protein>
    <recommendedName>
        <fullName>Probable RNA methyltransferase PST_2231</fullName>
        <ecNumber>2.1.1.-</ecNumber>
    </recommendedName>
</protein>
<name>Y2231_STUS1</name>
<proteinExistence type="inferred from homology"/>
<evidence type="ECO:0000250" key="1"/>
<evidence type="ECO:0000255" key="2"/>
<evidence type="ECO:0000255" key="3">
    <source>
        <dbReference type="PROSITE-ProRule" id="PRU01266"/>
    </source>
</evidence>
<evidence type="ECO:0000305" key="4"/>